<protein>
    <recommendedName>
        <fullName>Uncharacterized protein C688.12c</fullName>
    </recommendedName>
</protein>
<reference key="1">
    <citation type="journal article" date="2002" name="Nature">
        <title>The genome sequence of Schizosaccharomyces pombe.</title>
        <authorList>
            <person name="Wood V."/>
            <person name="Gwilliam R."/>
            <person name="Rajandream M.A."/>
            <person name="Lyne M.H."/>
            <person name="Lyne R."/>
            <person name="Stewart A."/>
            <person name="Sgouros J.G."/>
            <person name="Peat N."/>
            <person name="Hayles J."/>
            <person name="Baker S.G."/>
            <person name="Basham D."/>
            <person name="Bowman S."/>
            <person name="Brooks K."/>
            <person name="Brown D."/>
            <person name="Brown S."/>
            <person name="Chillingworth T."/>
            <person name="Churcher C.M."/>
            <person name="Collins M."/>
            <person name="Connor R."/>
            <person name="Cronin A."/>
            <person name="Davis P."/>
            <person name="Feltwell T."/>
            <person name="Fraser A."/>
            <person name="Gentles S."/>
            <person name="Goble A."/>
            <person name="Hamlin N."/>
            <person name="Harris D.E."/>
            <person name="Hidalgo J."/>
            <person name="Hodgson G."/>
            <person name="Holroyd S."/>
            <person name="Hornsby T."/>
            <person name="Howarth S."/>
            <person name="Huckle E.J."/>
            <person name="Hunt S."/>
            <person name="Jagels K."/>
            <person name="James K.D."/>
            <person name="Jones L."/>
            <person name="Jones M."/>
            <person name="Leather S."/>
            <person name="McDonald S."/>
            <person name="McLean J."/>
            <person name="Mooney P."/>
            <person name="Moule S."/>
            <person name="Mungall K.L."/>
            <person name="Murphy L.D."/>
            <person name="Niblett D."/>
            <person name="Odell C."/>
            <person name="Oliver K."/>
            <person name="O'Neil S."/>
            <person name="Pearson D."/>
            <person name="Quail M.A."/>
            <person name="Rabbinowitsch E."/>
            <person name="Rutherford K.M."/>
            <person name="Rutter S."/>
            <person name="Saunders D."/>
            <person name="Seeger K."/>
            <person name="Sharp S."/>
            <person name="Skelton J."/>
            <person name="Simmonds M.N."/>
            <person name="Squares R."/>
            <person name="Squares S."/>
            <person name="Stevens K."/>
            <person name="Taylor K."/>
            <person name="Taylor R.G."/>
            <person name="Tivey A."/>
            <person name="Walsh S.V."/>
            <person name="Warren T."/>
            <person name="Whitehead S."/>
            <person name="Woodward J.R."/>
            <person name="Volckaert G."/>
            <person name="Aert R."/>
            <person name="Robben J."/>
            <person name="Grymonprez B."/>
            <person name="Weltjens I."/>
            <person name="Vanstreels E."/>
            <person name="Rieger M."/>
            <person name="Schaefer M."/>
            <person name="Mueller-Auer S."/>
            <person name="Gabel C."/>
            <person name="Fuchs M."/>
            <person name="Duesterhoeft A."/>
            <person name="Fritzc C."/>
            <person name="Holzer E."/>
            <person name="Moestl D."/>
            <person name="Hilbert H."/>
            <person name="Borzym K."/>
            <person name="Langer I."/>
            <person name="Beck A."/>
            <person name="Lehrach H."/>
            <person name="Reinhardt R."/>
            <person name="Pohl T.M."/>
            <person name="Eger P."/>
            <person name="Zimmermann W."/>
            <person name="Wedler H."/>
            <person name="Wambutt R."/>
            <person name="Purnelle B."/>
            <person name="Goffeau A."/>
            <person name="Cadieu E."/>
            <person name="Dreano S."/>
            <person name="Gloux S."/>
            <person name="Lelaure V."/>
            <person name="Mottier S."/>
            <person name="Galibert F."/>
            <person name="Aves S.J."/>
            <person name="Xiang Z."/>
            <person name="Hunt C."/>
            <person name="Moore K."/>
            <person name="Hurst S.M."/>
            <person name="Lucas M."/>
            <person name="Rochet M."/>
            <person name="Gaillardin C."/>
            <person name="Tallada V.A."/>
            <person name="Garzon A."/>
            <person name="Thode G."/>
            <person name="Daga R.R."/>
            <person name="Cruzado L."/>
            <person name="Jimenez J."/>
            <person name="Sanchez M."/>
            <person name="del Rey F."/>
            <person name="Benito J."/>
            <person name="Dominguez A."/>
            <person name="Revuelta J.L."/>
            <person name="Moreno S."/>
            <person name="Armstrong J."/>
            <person name="Forsburg S.L."/>
            <person name="Cerutti L."/>
            <person name="Lowe T."/>
            <person name="McCombie W.R."/>
            <person name="Paulsen I."/>
            <person name="Potashkin J."/>
            <person name="Shpakovski G.V."/>
            <person name="Ussery D."/>
            <person name="Barrell B.G."/>
            <person name="Nurse P."/>
        </authorList>
    </citation>
    <scope>NUCLEOTIDE SEQUENCE [LARGE SCALE GENOMIC DNA]</scope>
    <source>
        <strain>972 / ATCC 24843</strain>
    </source>
</reference>
<reference key="2">
    <citation type="journal article" date="2000" name="Genes Cells">
        <title>Large-scale screening of intracellular protein localization in living fission yeast cells by the use of a GFP-fusion genomic DNA library.</title>
        <authorList>
            <person name="Ding D.-Q."/>
            <person name="Tomita Y."/>
            <person name="Yamamoto A."/>
            <person name="Chikashige Y."/>
            <person name="Haraguchi T."/>
            <person name="Hiraoka Y."/>
        </authorList>
    </citation>
    <scope>NUCLEOTIDE SEQUENCE [LARGE SCALE GENOMIC DNA] OF 1-83</scope>
    <scope>SUBCELLULAR LOCATION</scope>
    <source>
        <strain>ATCC 38364 / 968</strain>
    </source>
</reference>
<dbReference type="EMBL" id="CU329670">
    <property type="protein sequence ID" value="CAB90778.1"/>
    <property type="molecule type" value="Genomic_DNA"/>
</dbReference>
<dbReference type="EMBL" id="AB027854">
    <property type="protein sequence ID" value="BAA87158.1"/>
    <property type="molecule type" value="Genomic_DNA"/>
</dbReference>
<dbReference type="RefSeq" id="NP_594070.1">
    <property type="nucleotide sequence ID" value="NM_001019494.2"/>
</dbReference>
<dbReference type="SMR" id="Q9P6L4"/>
<dbReference type="BioGRID" id="279779">
    <property type="interactions" value="16"/>
</dbReference>
<dbReference type="PaxDb" id="4896-SPAC688.12c.1"/>
<dbReference type="EnsemblFungi" id="SPAC688.12c.1">
    <property type="protein sequence ID" value="SPAC688.12c.1:pep"/>
    <property type="gene ID" value="SPAC688.12c"/>
</dbReference>
<dbReference type="KEGG" id="spo:2543357"/>
<dbReference type="PomBase" id="SPAC688.12c"/>
<dbReference type="VEuPathDB" id="FungiDB:SPAC688.12c"/>
<dbReference type="HOGENOM" id="CLU_1661809_0_0_1"/>
<dbReference type="InParanoid" id="Q9P6L4"/>
<dbReference type="OMA" id="PPGRIKW"/>
<dbReference type="PRO" id="PR:Q9P6L4"/>
<dbReference type="Proteomes" id="UP000002485">
    <property type="component" value="Chromosome I"/>
</dbReference>
<dbReference type="GO" id="GO:0005783">
    <property type="term" value="C:endoplasmic reticulum"/>
    <property type="evidence" value="ECO:0007005"/>
    <property type="project" value="PomBase"/>
</dbReference>
<dbReference type="GO" id="GO:0016020">
    <property type="term" value="C:membrane"/>
    <property type="evidence" value="ECO:0007669"/>
    <property type="project" value="UniProtKB-SubCell"/>
</dbReference>
<gene>
    <name type="ORF">SPAC688.12c</name>
</gene>
<keyword id="KW-0472">Membrane</keyword>
<keyword id="KW-1185">Reference proteome</keyword>
<keyword id="KW-0812">Transmembrane</keyword>
<keyword id="KW-1133">Transmembrane helix</keyword>
<accession>Q9P6L4</accession>
<accession>Q9UU27</accession>
<sequence>MSEEESPYQLTKTFSNPKNNKIGLAIFLIGAFINLIHIYKPKGPSNNPTKRNYHISFGPPGKIRWFPLGIRKEVRSNVSGREIIIKMIITFILVQTTLITLDLYVFGATGLGLILSWKLFEVACANPEDEALLAERKQRLKEQREKKEQKKEQKKEKKTERRKKKKL</sequence>
<organism>
    <name type="scientific">Schizosaccharomyces pombe (strain 972 / ATCC 24843)</name>
    <name type="common">Fission yeast</name>
    <dbReference type="NCBI Taxonomy" id="284812"/>
    <lineage>
        <taxon>Eukaryota</taxon>
        <taxon>Fungi</taxon>
        <taxon>Dikarya</taxon>
        <taxon>Ascomycota</taxon>
        <taxon>Taphrinomycotina</taxon>
        <taxon>Schizosaccharomycetes</taxon>
        <taxon>Schizosaccharomycetales</taxon>
        <taxon>Schizosaccharomycetaceae</taxon>
        <taxon>Schizosaccharomyces</taxon>
    </lineage>
</organism>
<comment type="subcellular location">
    <subcellularLocation>
        <location evidence="3">Membrane</location>
        <topology evidence="3">Multi-pass membrane protein</topology>
    </subcellularLocation>
</comment>
<proteinExistence type="predicted"/>
<name>YKQC_SCHPO</name>
<evidence type="ECO:0000255" key="1"/>
<evidence type="ECO:0000256" key="2">
    <source>
        <dbReference type="SAM" id="MobiDB-lite"/>
    </source>
</evidence>
<evidence type="ECO:0000269" key="3">
    <source>
    </source>
</evidence>
<feature type="chain" id="PRO_0000116832" description="Uncharacterized protein C688.12c">
    <location>
        <begin position="1"/>
        <end position="167"/>
    </location>
</feature>
<feature type="transmembrane region" description="Helical" evidence="1">
    <location>
        <begin position="21"/>
        <end position="41"/>
    </location>
</feature>
<feature type="transmembrane region" description="Helical" evidence="1">
    <location>
        <begin position="87"/>
        <end position="107"/>
    </location>
</feature>
<feature type="region of interest" description="Disordered" evidence="2">
    <location>
        <begin position="136"/>
        <end position="167"/>
    </location>
</feature>
<feature type="compositionally biased region" description="Basic and acidic residues" evidence="2">
    <location>
        <begin position="136"/>
        <end position="159"/>
    </location>
</feature>